<accession>A4XJK7</accession>
<evidence type="ECO:0000255" key="1">
    <source>
        <dbReference type="HAMAP-Rule" id="MF_01216"/>
    </source>
</evidence>
<keyword id="KW-0285">Flavoprotein</keyword>
<keyword id="KW-0288">FMN</keyword>
<keyword id="KW-0520">NAD</keyword>
<keyword id="KW-0560">Oxidoreductase</keyword>
<protein>
    <recommendedName>
        <fullName evidence="1">FMN-dependent NADH:quinone oxidoreductase</fullName>
        <ecNumber evidence="1">1.6.5.-</ecNumber>
    </recommendedName>
    <alternativeName>
        <fullName evidence="1">Azo-dye reductase</fullName>
    </alternativeName>
    <alternativeName>
        <fullName evidence="1">FMN-dependent NADH-azo compound oxidoreductase</fullName>
    </alternativeName>
    <alternativeName>
        <fullName evidence="1">FMN-dependent NADH-azoreductase</fullName>
        <ecNumber evidence="1">1.7.1.17</ecNumber>
    </alternativeName>
</protein>
<gene>
    <name evidence="1" type="primary">azoR</name>
    <name type="ordered locus">Csac_1499</name>
</gene>
<dbReference type="EC" id="1.6.5.-" evidence="1"/>
<dbReference type="EC" id="1.7.1.17" evidence="1"/>
<dbReference type="EMBL" id="CP000679">
    <property type="protein sequence ID" value="ABP67092.1"/>
    <property type="molecule type" value="Genomic_DNA"/>
</dbReference>
<dbReference type="RefSeq" id="WP_011917027.1">
    <property type="nucleotide sequence ID" value="NC_009437.1"/>
</dbReference>
<dbReference type="SMR" id="A4XJK7"/>
<dbReference type="STRING" id="351627.Csac_1499"/>
<dbReference type="KEGG" id="csc:Csac_1499"/>
<dbReference type="eggNOG" id="COG1182">
    <property type="taxonomic scope" value="Bacteria"/>
</dbReference>
<dbReference type="HOGENOM" id="CLU_088964_3_1_9"/>
<dbReference type="OrthoDB" id="9805013at2"/>
<dbReference type="Proteomes" id="UP000000256">
    <property type="component" value="Chromosome"/>
</dbReference>
<dbReference type="GO" id="GO:0009055">
    <property type="term" value="F:electron transfer activity"/>
    <property type="evidence" value="ECO:0007669"/>
    <property type="project" value="UniProtKB-UniRule"/>
</dbReference>
<dbReference type="GO" id="GO:0010181">
    <property type="term" value="F:FMN binding"/>
    <property type="evidence" value="ECO:0007669"/>
    <property type="project" value="UniProtKB-UniRule"/>
</dbReference>
<dbReference type="GO" id="GO:0016652">
    <property type="term" value="F:oxidoreductase activity, acting on NAD(P)H as acceptor"/>
    <property type="evidence" value="ECO:0007669"/>
    <property type="project" value="UniProtKB-UniRule"/>
</dbReference>
<dbReference type="GO" id="GO:0016655">
    <property type="term" value="F:oxidoreductase activity, acting on NAD(P)H, quinone or similar compound as acceptor"/>
    <property type="evidence" value="ECO:0007669"/>
    <property type="project" value="InterPro"/>
</dbReference>
<dbReference type="Gene3D" id="3.40.50.360">
    <property type="match status" value="1"/>
</dbReference>
<dbReference type="HAMAP" id="MF_01216">
    <property type="entry name" value="Azoreductase_type1"/>
    <property type="match status" value="1"/>
</dbReference>
<dbReference type="InterPro" id="IPR003680">
    <property type="entry name" value="Flavodoxin_fold"/>
</dbReference>
<dbReference type="InterPro" id="IPR029039">
    <property type="entry name" value="Flavoprotein-like_sf"/>
</dbReference>
<dbReference type="InterPro" id="IPR050104">
    <property type="entry name" value="FMN-dep_NADH:Q_OxRdtase_AzoR1"/>
</dbReference>
<dbReference type="InterPro" id="IPR023048">
    <property type="entry name" value="NADH:quinone_OxRdtase_FMN_depd"/>
</dbReference>
<dbReference type="PANTHER" id="PTHR43741">
    <property type="entry name" value="FMN-DEPENDENT NADH-AZOREDUCTASE 1"/>
    <property type="match status" value="1"/>
</dbReference>
<dbReference type="PANTHER" id="PTHR43741:SF7">
    <property type="entry name" value="FMN-DEPENDENT NADH:QUINONE OXIDOREDUCTASE"/>
    <property type="match status" value="1"/>
</dbReference>
<dbReference type="Pfam" id="PF02525">
    <property type="entry name" value="Flavodoxin_2"/>
    <property type="match status" value="1"/>
</dbReference>
<dbReference type="SUPFAM" id="SSF52218">
    <property type="entry name" value="Flavoproteins"/>
    <property type="match status" value="1"/>
</dbReference>
<feature type="chain" id="PRO_1000066498" description="FMN-dependent NADH:quinone oxidoreductase">
    <location>
        <begin position="1"/>
        <end position="201"/>
    </location>
</feature>
<feature type="binding site" evidence="1">
    <location>
        <begin position="92"/>
        <end position="95"/>
    </location>
    <ligand>
        <name>FMN</name>
        <dbReference type="ChEBI" id="CHEBI:58210"/>
    </ligand>
</feature>
<name>AZOR_CALS8</name>
<proteinExistence type="inferred from homology"/>
<sequence>MAKLLYIKANPKSDQSSRTFIISEHFIKVYKEFHPNDQIITLDLYKEGIHFLSQEDINDIFAPKTEASKHHPILKYAYQFLEADKYVFAAPMWNLGIPAILKAYIDYITVSGITFKYTEQGAVGLLRGKKAVHIMATGGEYKTPPFSDFEMANRYLKTILGFMGVEDFQTITAQRLDIVGEDVEKIISNALKEAEEIAKRF</sequence>
<comment type="function">
    <text evidence="1">Quinone reductase that provides resistance to thiol-specific stress caused by electrophilic quinones.</text>
</comment>
<comment type="function">
    <text evidence="1">Also exhibits azoreductase activity. Catalyzes the reductive cleavage of the azo bond in aromatic azo compounds to the corresponding amines.</text>
</comment>
<comment type="catalytic activity">
    <reaction evidence="1">
        <text>2 a quinone + NADH + H(+) = 2 a 1,4-benzosemiquinone + NAD(+)</text>
        <dbReference type="Rhea" id="RHEA:65952"/>
        <dbReference type="ChEBI" id="CHEBI:15378"/>
        <dbReference type="ChEBI" id="CHEBI:57540"/>
        <dbReference type="ChEBI" id="CHEBI:57945"/>
        <dbReference type="ChEBI" id="CHEBI:132124"/>
        <dbReference type="ChEBI" id="CHEBI:134225"/>
    </reaction>
</comment>
<comment type="catalytic activity">
    <reaction evidence="1">
        <text>N,N-dimethyl-1,4-phenylenediamine + anthranilate + 2 NAD(+) = 2-(4-dimethylaminophenyl)diazenylbenzoate + 2 NADH + 2 H(+)</text>
        <dbReference type="Rhea" id="RHEA:55872"/>
        <dbReference type="ChEBI" id="CHEBI:15378"/>
        <dbReference type="ChEBI" id="CHEBI:15783"/>
        <dbReference type="ChEBI" id="CHEBI:16567"/>
        <dbReference type="ChEBI" id="CHEBI:57540"/>
        <dbReference type="ChEBI" id="CHEBI:57945"/>
        <dbReference type="ChEBI" id="CHEBI:71579"/>
        <dbReference type="EC" id="1.7.1.17"/>
    </reaction>
</comment>
<comment type="cofactor">
    <cofactor evidence="1">
        <name>FMN</name>
        <dbReference type="ChEBI" id="CHEBI:58210"/>
    </cofactor>
    <text evidence="1">Binds 1 FMN per subunit.</text>
</comment>
<comment type="subunit">
    <text evidence="1">Homodimer.</text>
</comment>
<comment type="similarity">
    <text evidence="1">Belongs to the azoreductase type 1 family.</text>
</comment>
<reference key="1">
    <citation type="submission" date="2007-04" db="EMBL/GenBank/DDBJ databases">
        <title>Genome sequence of the thermophilic hydrogen-producing bacterium Caldicellulosiruptor saccharolyticus DSM 8903.</title>
        <authorList>
            <person name="Copeland A."/>
            <person name="Lucas S."/>
            <person name="Lapidus A."/>
            <person name="Barry K."/>
            <person name="Detter J.C."/>
            <person name="Glavina del Rio T."/>
            <person name="Hammon N."/>
            <person name="Israni S."/>
            <person name="Dalin E."/>
            <person name="Tice H."/>
            <person name="Pitluck S."/>
            <person name="Kiss H."/>
            <person name="Brettin T."/>
            <person name="Bruce D."/>
            <person name="Han C."/>
            <person name="Schmutz J."/>
            <person name="Larimer F."/>
            <person name="Land M."/>
            <person name="Hauser L."/>
            <person name="Kyrpides N."/>
            <person name="Lykidis A."/>
            <person name="van de Werken H.J.G."/>
            <person name="Verhaart M.R.A."/>
            <person name="VanFossen A.L."/>
            <person name="Lewis D.L."/>
            <person name="Nichols J.D."/>
            <person name="Goorissen H.P."/>
            <person name="van Niel E.W.J."/>
            <person name="Stams F.J.M."/>
            <person name="Willquist K.U."/>
            <person name="Ward D.E."/>
            <person name="van der Oost J."/>
            <person name="Kelly R.M."/>
            <person name="Kengen S.M.W."/>
            <person name="Richardson P."/>
        </authorList>
    </citation>
    <scope>NUCLEOTIDE SEQUENCE [LARGE SCALE GENOMIC DNA]</scope>
    <source>
        <strain>ATCC 43494 / DSM 8903 / Tp8T 6331</strain>
    </source>
</reference>
<organism>
    <name type="scientific">Caldicellulosiruptor saccharolyticus (strain ATCC 43494 / DSM 8903 / Tp8T 6331)</name>
    <dbReference type="NCBI Taxonomy" id="351627"/>
    <lineage>
        <taxon>Bacteria</taxon>
        <taxon>Bacillati</taxon>
        <taxon>Bacillota</taxon>
        <taxon>Bacillota incertae sedis</taxon>
        <taxon>Caldicellulosiruptorales</taxon>
        <taxon>Caldicellulosiruptoraceae</taxon>
        <taxon>Caldicellulosiruptor</taxon>
    </lineage>
</organism>